<evidence type="ECO:0000255" key="1">
    <source>
        <dbReference type="HAMAP-Rule" id="MF_01418"/>
    </source>
</evidence>
<reference key="1">
    <citation type="journal article" date="2009" name="PLoS Genet.">
        <title>Organised genome dynamics in the Escherichia coli species results in highly diverse adaptive paths.</title>
        <authorList>
            <person name="Touchon M."/>
            <person name="Hoede C."/>
            <person name="Tenaillon O."/>
            <person name="Barbe V."/>
            <person name="Baeriswyl S."/>
            <person name="Bidet P."/>
            <person name="Bingen E."/>
            <person name="Bonacorsi S."/>
            <person name="Bouchier C."/>
            <person name="Bouvet O."/>
            <person name="Calteau A."/>
            <person name="Chiapello H."/>
            <person name="Clermont O."/>
            <person name="Cruveiller S."/>
            <person name="Danchin A."/>
            <person name="Diard M."/>
            <person name="Dossat C."/>
            <person name="Karoui M.E."/>
            <person name="Frapy E."/>
            <person name="Garry L."/>
            <person name="Ghigo J.M."/>
            <person name="Gilles A.M."/>
            <person name="Johnson J."/>
            <person name="Le Bouguenec C."/>
            <person name="Lescat M."/>
            <person name="Mangenot S."/>
            <person name="Martinez-Jehanne V."/>
            <person name="Matic I."/>
            <person name="Nassif X."/>
            <person name="Oztas S."/>
            <person name="Petit M.A."/>
            <person name="Pichon C."/>
            <person name="Rouy Z."/>
            <person name="Ruf C.S."/>
            <person name="Schneider D."/>
            <person name="Tourret J."/>
            <person name="Vacherie B."/>
            <person name="Vallenet D."/>
            <person name="Medigue C."/>
            <person name="Rocha E.P.C."/>
            <person name="Denamur E."/>
        </authorList>
    </citation>
    <scope>NUCLEOTIDE SEQUENCE [LARGE SCALE GENOMIC DNA]</scope>
    <source>
        <strain>UMN026 / ExPEC</strain>
    </source>
</reference>
<feature type="chain" id="PRO_1000145612" description="Agmatinase">
    <location>
        <begin position="1"/>
        <end position="306"/>
    </location>
</feature>
<feature type="binding site" evidence="1">
    <location>
        <position position="126"/>
    </location>
    <ligand>
        <name>Mn(2+)</name>
        <dbReference type="ChEBI" id="CHEBI:29035"/>
    </ligand>
</feature>
<feature type="binding site" evidence="1">
    <location>
        <position position="149"/>
    </location>
    <ligand>
        <name>Mn(2+)</name>
        <dbReference type="ChEBI" id="CHEBI:29035"/>
    </ligand>
</feature>
<feature type="binding site" evidence="1">
    <location>
        <position position="151"/>
    </location>
    <ligand>
        <name>Mn(2+)</name>
        <dbReference type="ChEBI" id="CHEBI:29035"/>
    </ligand>
</feature>
<feature type="binding site" evidence="1">
    <location>
        <position position="153"/>
    </location>
    <ligand>
        <name>Mn(2+)</name>
        <dbReference type="ChEBI" id="CHEBI:29035"/>
    </ligand>
</feature>
<feature type="binding site" evidence="1">
    <location>
        <position position="230"/>
    </location>
    <ligand>
        <name>Mn(2+)</name>
        <dbReference type="ChEBI" id="CHEBI:29035"/>
    </ligand>
</feature>
<feature type="binding site" evidence="1">
    <location>
        <position position="232"/>
    </location>
    <ligand>
        <name>Mn(2+)</name>
        <dbReference type="ChEBI" id="CHEBI:29035"/>
    </ligand>
</feature>
<name>SPEB_ECOLU</name>
<dbReference type="EC" id="3.5.3.11" evidence="1"/>
<dbReference type="EMBL" id="CU928163">
    <property type="protein sequence ID" value="CAR14451.1"/>
    <property type="molecule type" value="Genomic_DNA"/>
</dbReference>
<dbReference type="RefSeq" id="WP_000105566.1">
    <property type="nucleotide sequence ID" value="NC_011751.1"/>
</dbReference>
<dbReference type="RefSeq" id="YP_002413970.1">
    <property type="nucleotide sequence ID" value="NC_011751.1"/>
</dbReference>
<dbReference type="SMR" id="B7N7I9"/>
<dbReference type="STRING" id="585056.ECUMN_3288"/>
<dbReference type="GeneID" id="89517749"/>
<dbReference type="KEGG" id="eum:ECUMN_3288"/>
<dbReference type="PATRIC" id="fig|585056.7.peg.3467"/>
<dbReference type="HOGENOM" id="CLU_039478_0_0_6"/>
<dbReference type="UniPathway" id="UPA00534">
    <property type="reaction ID" value="UER00287"/>
</dbReference>
<dbReference type="Proteomes" id="UP000007097">
    <property type="component" value="Chromosome"/>
</dbReference>
<dbReference type="GO" id="GO:0008783">
    <property type="term" value="F:agmatinase activity"/>
    <property type="evidence" value="ECO:0007669"/>
    <property type="project" value="UniProtKB-UniRule"/>
</dbReference>
<dbReference type="GO" id="GO:0030145">
    <property type="term" value="F:manganese ion binding"/>
    <property type="evidence" value="ECO:0007669"/>
    <property type="project" value="InterPro"/>
</dbReference>
<dbReference type="GO" id="GO:0033389">
    <property type="term" value="P:putrescine biosynthetic process from arginine, via agmatine"/>
    <property type="evidence" value="ECO:0007669"/>
    <property type="project" value="TreeGrafter"/>
</dbReference>
<dbReference type="GO" id="GO:0008295">
    <property type="term" value="P:spermidine biosynthetic process"/>
    <property type="evidence" value="ECO:0007669"/>
    <property type="project" value="UniProtKB-UniRule"/>
</dbReference>
<dbReference type="CDD" id="cd11592">
    <property type="entry name" value="Agmatinase_PAH"/>
    <property type="match status" value="1"/>
</dbReference>
<dbReference type="FunFam" id="3.40.800.10:FF:000001">
    <property type="entry name" value="Agmatinase"/>
    <property type="match status" value="1"/>
</dbReference>
<dbReference type="Gene3D" id="3.40.800.10">
    <property type="entry name" value="Ureohydrolase domain"/>
    <property type="match status" value="1"/>
</dbReference>
<dbReference type="HAMAP" id="MF_01418">
    <property type="entry name" value="SpeB"/>
    <property type="match status" value="1"/>
</dbReference>
<dbReference type="InterPro" id="IPR023694">
    <property type="entry name" value="Agmatinase"/>
</dbReference>
<dbReference type="InterPro" id="IPR005925">
    <property type="entry name" value="Agmatinase-rel"/>
</dbReference>
<dbReference type="InterPro" id="IPR006035">
    <property type="entry name" value="Ureohydrolase"/>
</dbReference>
<dbReference type="InterPro" id="IPR023696">
    <property type="entry name" value="Ureohydrolase_dom_sf"/>
</dbReference>
<dbReference type="InterPro" id="IPR020855">
    <property type="entry name" value="Ureohydrolase_Mn_BS"/>
</dbReference>
<dbReference type="NCBIfam" id="TIGR01230">
    <property type="entry name" value="agmatinase"/>
    <property type="match status" value="1"/>
</dbReference>
<dbReference type="NCBIfam" id="NF002564">
    <property type="entry name" value="PRK02190.1"/>
    <property type="match status" value="1"/>
</dbReference>
<dbReference type="PANTHER" id="PTHR11358">
    <property type="entry name" value="ARGINASE/AGMATINASE"/>
    <property type="match status" value="1"/>
</dbReference>
<dbReference type="PANTHER" id="PTHR11358:SF26">
    <property type="entry name" value="GUANIDINO ACID HYDROLASE, MITOCHONDRIAL"/>
    <property type="match status" value="1"/>
</dbReference>
<dbReference type="Pfam" id="PF00491">
    <property type="entry name" value="Arginase"/>
    <property type="match status" value="1"/>
</dbReference>
<dbReference type="PIRSF" id="PIRSF036979">
    <property type="entry name" value="Arginase"/>
    <property type="match status" value="1"/>
</dbReference>
<dbReference type="SUPFAM" id="SSF52768">
    <property type="entry name" value="Arginase/deacetylase"/>
    <property type="match status" value="1"/>
</dbReference>
<dbReference type="PROSITE" id="PS01053">
    <property type="entry name" value="ARGINASE_1"/>
    <property type="match status" value="1"/>
</dbReference>
<dbReference type="PROSITE" id="PS51409">
    <property type="entry name" value="ARGINASE_2"/>
    <property type="match status" value="1"/>
</dbReference>
<accession>B7N7I9</accession>
<sequence length="306" mass="33557">MSTLGHQYDNSLVSNAFGFLRLPMNFQPYDSDADWVITGVPFDMATSGRAGGRHGPAAIRQVSTNLAWEHNRFPWNFDMRERLNVVDCGDLVYAFGDAREMSEKLQAHAEKLLAAGKRMLSFGGDHFVTLPLLRAHAKHFGKMALVHFDAHTDTYANGCEFDHGTMFYTAPKEGLIDPNHSVQIGIRTEFDKDNGFTVLDACQVNDRSVDDVIAQVKQIVGDMPVYLTFDIDCLDPAFAPGTGTPVIGGLTSDRAIKLVRGLKDLNIVGMDVVEVAPAYDQSEITALAAATLALEMLYIQAAKKGE</sequence>
<protein>
    <recommendedName>
        <fullName evidence="1">Agmatinase</fullName>
        <ecNumber evidence="1">3.5.3.11</ecNumber>
    </recommendedName>
    <alternativeName>
        <fullName evidence="1">Agmatine ureohydrolase</fullName>
        <shortName evidence="1">AUH</shortName>
    </alternativeName>
</protein>
<organism>
    <name type="scientific">Escherichia coli O17:K52:H18 (strain UMN026 / ExPEC)</name>
    <dbReference type="NCBI Taxonomy" id="585056"/>
    <lineage>
        <taxon>Bacteria</taxon>
        <taxon>Pseudomonadati</taxon>
        <taxon>Pseudomonadota</taxon>
        <taxon>Gammaproteobacteria</taxon>
        <taxon>Enterobacterales</taxon>
        <taxon>Enterobacteriaceae</taxon>
        <taxon>Escherichia</taxon>
    </lineage>
</organism>
<gene>
    <name evidence="1" type="primary">speB</name>
    <name type="ordered locus">ECUMN_3288</name>
</gene>
<comment type="function">
    <text evidence="1">Catalyzes the formation of putrescine from agmatine.</text>
</comment>
<comment type="catalytic activity">
    <reaction evidence="1">
        <text>agmatine + H2O = urea + putrescine</text>
        <dbReference type="Rhea" id="RHEA:13929"/>
        <dbReference type="ChEBI" id="CHEBI:15377"/>
        <dbReference type="ChEBI" id="CHEBI:16199"/>
        <dbReference type="ChEBI" id="CHEBI:58145"/>
        <dbReference type="ChEBI" id="CHEBI:326268"/>
        <dbReference type="EC" id="3.5.3.11"/>
    </reaction>
</comment>
<comment type="cofactor">
    <cofactor evidence="1">
        <name>Mn(2+)</name>
        <dbReference type="ChEBI" id="CHEBI:29035"/>
    </cofactor>
</comment>
<comment type="pathway">
    <text evidence="1">Amine and polyamine biosynthesis; putrescine biosynthesis via agmatine pathway; putrescine from agmatine: step 1/1.</text>
</comment>
<comment type="similarity">
    <text evidence="1">Belongs to the arginase family. Agmatinase subfamily.</text>
</comment>
<proteinExistence type="inferred from homology"/>
<keyword id="KW-0378">Hydrolase</keyword>
<keyword id="KW-0464">Manganese</keyword>
<keyword id="KW-0479">Metal-binding</keyword>
<keyword id="KW-0620">Polyamine biosynthesis</keyword>
<keyword id="KW-0661">Putrescine biosynthesis</keyword>
<keyword id="KW-0745">Spermidine biosynthesis</keyword>